<reference key="1">
    <citation type="journal article" date="2008" name="Genome Biol.">
        <title>A genomic analysis of the archaeal system Ignicoccus hospitalis-Nanoarchaeum equitans.</title>
        <authorList>
            <person name="Podar M."/>
            <person name="Anderson I."/>
            <person name="Makarova K.S."/>
            <person name="Elkins J.G."/>
            <person name="Ivanova N."/>
            <person name="Wall M.A."/>
            <person name="Lykidis A."/>
            <person name="Mavromatis K."/>
            <person name="Sun H."/>
            <person name="Hudson M.E."/>
            <person name="Chen W."/>
            <person name="Deciu C."/>
            <person name="Hutchison D."/>
            <person name="Eads J.R."/>
            <person name="Anderson A."/>
            <person name="Fernandes F."/>
            <person name="Szeto E."/>
            <person name="Lapidus A."/>
            <person name="Kyrpides N.C."/>
            <person name="Saier M.H. Jr."/>
            <person name="Richardson P.M."/>
            <person name="Rachel R."/>
            <person name="Huber H."/>
            <person name="Eisen J.A."/>
            <person name="Koonin E.V."/>
            <person name="Keller M."/>
            <person name="Stetter K.O."/>
        </authorList>
    </citation>
    <scope>NUCLEOTIDE SEQUENCE [LARGE SCALE GENOMIC DNA]</scope>
    <source>
        <strain>KIN4/I / DSM 18386 / JCM 14125</strain>
    </source>
</reference>
<evidence type="ECO:0000255" key="1">
    <source>
        <dbReference type="HAMAP-Rule" id="MF_00311"/>
    </source>
</evidence>
<proteinExistence type="inferred from homology"/>
<gene>
    <name evidence="1" type="primary">atpE</name>
    <name type="ordered locus">Igni_1080</name>
</gene>
<accession>A8ABF5</accession>
<feature type="chain" id="PRO_0000322528" description="A-type ATP synthase subunit E">
    <location>
        <begin position="1"/>
        <end position="208"/>
    </location>
</feature>
<keyword id="KW-0066">ATP synthesis</keyword>
<keyword id="KW-1003">Cell membrane</keyword>
<keyword id="KW-0375">Hydrogen ion transport</keyword>
<keyword id="KW-0406">Ion transport</keyword>
<keyword id="KW-0472">Membrane</keyword>
<keyword id="KW-1185">Reference proteome</keyword>
<keyword id="KW-0813">Transport</keyword>
<name>AATE_IGNH4</name>
<comment type="function">
    <text evidence="1">Component of the A-type ATP synthase that produces ATP from ADP in the presence of a proton gradient across the membrane.</text>
</comment>
<comment type="subunit">
    <text evidence="1">Has multiple subunits with at least A(3), B(3), C, D, E, F, H, I and proteolipid K(x).</text>
</comment>
<comment type="subcellular location">
    <subcellularLocation>
        <location evidence="1">Cell membrane</location>
        <topology evidence="1">Peripheral membrane protein</topology>
    </subcellularLocation>
</comment>
<comment type="similarity">
    <text evidence="1">Belongs to the V-ATPase E subunit family.</text>
</comment>
<sequence length="208" mass="23772">MVKVEFAGDVKNLTSYIEKDAKAKIDSVVEEAVKEAEKLLNEKKEELLERAVVDVEKLLSDAQARLSAEKSSIDMEVRRKVEERKKELFQKVVEEAWKRALEEAEKKTERYKKFLEKVLIAMSNEAGEDEVIAYVRADDLEDVRAMVQEKGLKNVVEVKDVKEVGREIKGGVLGKSKSGGVWYNYTLEKAFDELLREVYPKVLEALGF</sequence>
<protein>
    <recommendedName>
        <fullName evidence="1">A-type ATP synthase subunit E</fullName>
    </recommendedName>
</protein>
<dbReference type="EMBL" id="CP000816">
    <property type="protein sequence ID" value="ABU82257.1"/>
    <property type="molecule type" value="Genomic_DNA"/>
</dbReference>
<dbReference type="SMR" id="A8ABF5"/>
<dbReference type="STRING" id="453591.Igni_1080"/>
<dbReference type="KEGG" id="iho:Igni_1080"/>
<dbReference type="eggNOG" id="arCOG00869">
    <property type="taxonomic scope" value="Archaea"/>
</dbReference>
<dbReference type="HOGENOM" id="CLU_1318515_0_0_2"/>
<dbReference type="Proteomes" id="UP000000262">
    <property type="component" value="Chromosome"/>
</dbReference>
<dbReference type="GO" id="GO:0005886">
    <property type="term" value="C:plasma membrane"/>
    <property type="evidence" value="ECO:0007669"/>
    <property type="project" value="UniProtKB-SubCell"/>
</dbReference>
<dbReference type="GO" id="GO:0033178">
    <property type="term" value="C:proton-transporting two-sector ATPase complex, catalytic domain"/>
    <property type="evidence" value="ECO:0007669"/>
    <property type="project" value="InterPro"/>
</dbReference>
<dbReference type="GO" id="GO:0005524">
    <property type="term" value="F:ATP binding"/>
    <property type="evidence" value="ECO:0007669"/>
    <property type="project" value="UniProtKB-UniRule"/>
</dbReference>
<dbReference type="GO" id="GO:0046933">
    <property type="term" value="F:proton-transporting ATP synthase activity, rotational mechanism"/>
    <property type="evidence" value="ECO:0007669"/>
    <property type="project" value="UniProtKB-UniRule"/>
</dbReference>
<dbReference type="GO" id="GO:0046961">
    <property type="term" value="F:proton-transporting ATPase activity, rotational mechanism"/>
    <property type="evidence" value="ECO:0007669"/>
    <property type="project" value="InterPro"/>
</dbReference>
<dbReference type="GO" id="GO:0042777">
    <property type="term" value="P:proton motive force-driven plasma membrane ATP synthesis"/>
    <property type="evidence" value="ECO:0007669"/>
    <property type="project" value="UniProtKB-UniRule"/>
</dbReference>
<dbReference type="Gene3D" id="3.30.2320.30">
    <property type="entry name" value="ATP synthase, E subunit, C-terminal"/>
    <property type="match status" value="1"/>
</dbReference>
<dbReference type="HAMAP" id="MF_00311">
    <property type="entry name" value="ATP_synth_E_arch"/>
    <property type="match status" value="1"/>
</dbReference>
<dbReference type="InterPro" id="IPR038495">
    <property type="entry name" value="ATPase_E_C"/>
</dbReference>
<dbReference type="InterPro" id="IPR002842">
    <property type="entry name" value="ATPase_V1_Esu"/>
</dbReference>
<dbReference type="Pfam" id="PF01991">
    <property type="entry name" value="vATP-synt_E"/>
    <property type="match status" value="1"/>
</dbReference>
<dbReference type="SUPFAM" id="SSF160527">
    <property type="entry name" value="V-type ATPase subunit E-like"/>
    <property type="match status" value="1"/>
</dbReference>
<organism>
    <name type="scientific">Ignicoccus hospitalis (strain KIN4/I / DSM 18386 / JCM 14125)</name>
    <dbReference type="NCBI Taxonomy" id="453591"/>
    <lineage>
        <taxon>Archaea</taxon>
        <taxon>Thermoproteota</taxon>
        <taxon>Thermoprotei</taxon>
        <taxon>Desulfurococcales</taxon>
        <taxon>Desulfurococcaceae</taxon>
        <taxon>Ignicoccus</taxon>
    </lineage>
</organism>